<protein>
    <recommendedName>
        <fullName>APO protein 3, mitochondrial</fullName>
    </recommendedName>
</protein>
<organism>
    <name type="scientific">Arabidopsis thaliana</name>
    <name type="common">Mouse-ear cress</name>
    <dbReference type="NCBI Taxonomy" id="3702"/>
    <lineage>
        <taxon>Eukaryota</taxon>
        <taxon>Viridiplantae</taxon>
        <taxon>Streptophyta</taxon>
        <taxon>Embryophyta</taxon>
        <taxon>Tracheophyta</taxon>
        <taxon>Spermatophyta</taxon>
        <taxon>Magnoliopsida</taxon>
        <taxon>eudicotyledons</taxon>
        <taxon>Gunneridae</taxon>
        <taxon>Pentapetalae</taxon>
        <taxon>rosids</taxon>
        <taxon>malvids</taxon>
        <taxon>Brassicales</taxon>
        <taxon>Brassicaceae</taxon>
        <taxon>Camelineae</taxon>
        <taxon>Arabidopsis</taxon>
    </lineage>
</organism>
<comment type="function">
    <text evidence="4">May be involved in the stable assembly of several 4Fe-4S cluster-containing complexes of mitochondria.</text>
</comment>
<comment type="subcellular location">
    <subcellularLocation>
        <location evidence="4">Mitochondrion</location>
    </subcellularLocation>
</comment>
<comment type="domain">
    <text evidence="4">The APO repeats may provide ligands for 4Fe-4S centers.</text>
</comment>
<comment type="similarity">
    <text evidence="2">Belongs to the APO family.</text>
</comment>
<comment type="sequence caution" evidence="4">
    <conflict type="erroneous initiation">
        <sequence resource="EMBL-CDS" id="AAK48980"/>
    </conflict>
</comment>
<accession>Q9FH50</accession>
<accession>Q94JX7</accession>
<dbReference type="EMBL" id="AB022212">
    <property type="protein sequence ID" value="BAB08879.1"/>
    <property type="molecule type" value="Genomic_DNA"/>
</dbReference>
<dbReference type="EMBL" id="CP002688">
    <property type="protein sequence ID" value="AED97538.1"/>
    <property type="molecule type" value="Genomic_DNA"/>
</dbReference>
<dbReference type="EMBL" id="CP002688">
    <property type="protein sequence ID" value="AED97539.1"/>
    <property type="molecule type" value="Genomic_DNA"/>
</dbReference>
<dbReference type="EMBL" id="AF370553">
    <property type="protein sequence ID" value="AAK48980.1"/>
    <property type="status" value="ALT_INIT"/>
    <property type="molecule type" value="mRNA"/>
</dbReference>
<dbReference type="EMBL" id="BT002086">
    <property type="protein sequence ID" value="AAN72097.1"/>
    <property type="molecule type" value="mRNA"/>
</dbReference>
<dbReference type="RefSeq" id="NP_001119475.1">
    <property type="nucleotide sequence ID" value="NM_001126003.1"/>
</dbReference>
<dbReference type="RefSeq" id="NP_568945.2">
    <property type="nucleotide sequence ID" value="NM_125586.4"/>
</dbReference>
<dbReference type="FunCoup" id="Q9FH50">
    <property type="interactions" value="722"/>
</dbReference>
<dbReference type="STRING" id="3702.Q9FH50"/>
<dbReference type="GlyGen" id="Q9FH50">
    <property type="glycosylation" value="1 site"/>
</dbReference>
<dbReference type="PaxDb" id="3702-AT5G61930.2"/>
<dbReference type="EnsemblPlants" id="AT5G61930.1">
    <property type="protein sequence ID" value="AT5G61930.1"/>
    <property type="gene ID" value="AT5G61930"/>
</dbReference>
<dbReference type="EnsemblPlants" id="AT5G61930.2">
    <property type="protein sequence ID" value="AT5G61930.2"/>
    <property type="gene ID" value="AT5G61930"/>
</dbReference>
<dbReference type="GeneID" id="836314"/>
<dbReference type="Gramene" id="AT5G61930.1">
    <property type="protein sequence ID" value="AT5G61930.1"/>
    <property type="gene ID" value="AT5G61930"/>
</dbReference>
<dbReference type="Gramene" id="AT5G61930.2">
    <property type="protein sequence ID" value="AT5G61930.2"/>
    <property type="gene ID" value="AT5G61930"/>
</dbReference>
<dbReference type="KEGG" id="ath:AT5G61930"/>
<dbReference type="Araport" id="AT5G61930"/>
<dbReference type="TAIR" id="AT5G61930">
    <property type="gene designation" value="APO3"/>
</dbReference>
<dbReference type="eggNOG" id="ENOG502QRU6">
    <property type="taxonomic scope" value="Eukaryota"/>
</dbReference>
<dbReference type="HOGENOM" id="CLU_033199_0_0_1"/>
<dbReference type="InParanoid" id="Q9FH50"/>
<dbReference type="OMA" id="RNATHVW"/>
<dbReference type="OrthoDB" id="1926485at2759"/>
<dbReference type="PhylomeDB" id="Q9FH50"/>
<dbReference type="PRO" id="PR:Q9FH50"/>
<dbReference type="Proteomes" id="UP000006548">
    <property type="component" value="Chromosome 5"/>
</dbReference>
<dbReference type="ExpressionAtlas" id="Q9FH50">
    <property type="expression patterns" value="baseline and differential"/>
</dbReference>
<dbReference type="GO" id="GO:0005739">
    <property type="term" value="C:mitochondrion"/>
    <property type="evidence" value="ECO:0007669"/>
    <property type="project" value="UniProtKB-SubCell"/>
</dbReference>
<dbReference type="GO" id="GO:0003723">
    <property type="term" value="F:RNA binding"/>
    <property type="evidence" value="ECO:0007669"/>
    <property type="project" value="InterPro"/>
</dbReference>
<dbReference type="InterPro" id="IPR023342">
    <property type="entry name" value="APO_dom"/>
</dbReference>
<dbReference type="PANTHER" id="PTHR10388">
    <property type="entry name" value="EUKARYOTIC TRANSLATION INITIATION FACTOR SUI1"/>
    <property type="match status" value="1"/>
</dbReference>
<dbReference type="Pfam" id="PF05634">
    <property type="entry name" value="APO_RNA-bind"/>
    <property type="match status" value="2"/>
</dbReference>
<dbReference type="PROSITE" id="PS51499">
    <property type="entry name" value="APO"/>
    <property type="match status" value="2"/>
</dbReference>
<feature type="transit peptide" description="Mitochondrion" evidence="1">
    <location>
        <begin position="1"/>
        <end position="13"/>
    </location>
</feature>
<feature type="chain" id="PRO_0000001932" description="APO protein 3, mitochondrial">
    <location>
        <begin position="14"/>
        <end position="402"/>
    </location>
</feature>
<feature type="domain" description="APO 1" evidence="2">
    <location>
        <begin position="127"/>
        <end position="213"/>
    </location>
</feature>
<feature type="domain" description="APO 2" evidence="2">
    <location>
        <begin position="294"/>
        <end position="380"/>
    </location>
</feature>
<feature type="region of interest" description="Disordered" evidence="3">
    <location>
        <begin position="37"/>
        <end position="59"/>
    </location>
</feature>
<feature type="compositionally biased region" description="Basic and acidic residues" evidence="3">
    <location>
        <begin position="48"/>
        <end position="58"/>
    </location>
</feature>
<feature type="sequence conflict" description="In Ref. 3; AAK48980." evidence="4" ref="3">
    <original>Q</original>
    <variation>E</variation>
    <location>
        <position position="2"/>
    </location>
</feature>
<name>APO3_ARATH</name>
<evidence type="ECO:0000255" key="1"/>
<evidence type="ECO:0000255" key="2">
    <source>
        <dbReference type="PROSITE-ProRule" id="PRU00832"/>
    </source>
</evidence>
<evidence type="ECO:0000256" key="3">
    <source>
        <dbReference type="SAM" id="MobiDB-lite"/>
    </source>
</evidence>
<evidence type="ECO:0000305" key="4"/>
<sequence>MQRRKLVEISIFVIRKSNFSSSIKSLTNLDVDVSVDNDEDPLYADVPKPPKDKSERKPYPTPMKELIRRAKEEKQLRKLQPCRVLEDPPDNGLLVPELVDVAHCVHRCRNMLLSGLSKIIHHVPVHRCRLCAEVHIGKQGHEIRTCTGPGSGSRSATHVWKRGRVSDVVLFPKCFHLYDRAVKPRVIHDERFTVPKISAVLELCIQAGVDLEKFPSKRRSKPVYSIEGRIVDFEDVNDGNSELAVTSTTTLIQEDDRCKEEKKSLKELSFETMESWFEMVLGVRKLMERYRVWTCGYCPEIQVGPKGHKVRMCKATKHQMRDGMHAWQEATIDDVVGPTYVWHVRDPTDGSVLDNSLKRFYGKAPAVIEMCVQGGAPVPDQYNSMMRLDVVYPQRDEVDLVA</sequence>
<reference key="1">
    <citation type="journal article" date="2000" name="DNA Res.">
        <title>Structural analysis of Arabidopsis thaliana chromosome 5. X. Sequence features of the regions of 3,076,755 bp covered by sixty P1 and TAC clones.</title>
        <authorList>
            <person name="Sato S."/>
            <person name="Nakamura Y."/>
            <person name="Kaneko T."/>
            <person name="Katoh T."/>
            <person name="Asamizu E."/>
            <person name="Kotani H."/>
            <person name="Tabata S."/>
        </authorList>
    </citation>
    <scope>NUCLEOTIDE SEQUENCE [LARGE SCALE GENOMIC DNA]</scope>
    <source>
        <strain>cv. Columbia</strain>
    </source>
</reference>
<reference key="2">
    <citation type="journal article" date="2017" name="Plant J.">
        <title>Araport11: a complete reannotation of the Arabidopsis thaliana reference genome.</title>
        <authorList>
            <person name="Cheng C.Y."/>
            <person name="Krishnakumar V."/>
            <person name="Chan A.P."/>
            <person name="Thibaud-Nissen F."/>
            <person name="Schobel S."/>
            <person name="Town C.D."/>
        </authorList>
    </citation>
    <scope>GENOME REANNOTATION</scope>
    <source>
        <strain>cv. Columbia</strain>
    </source>
</reference>
<reference key="3">
    <citation type="journal article" date="2003" name="Science">
        <title>Empirical analysis of transcriptional activity in the Arabidopsis genome.</title>
        <authorList>
            <person name="Yamada K."/>
            <person name="Lim J."/>
            <person name="Dale J.M."/>
            <person name="Chen H."/>
            <person name="Shinn P."/>
            <person name="Palm C.J."/>
            <person name="Southwick A.M."/>
            <person name="Wu H.C."/>
            <person name="Kim C.J."/>
            <person name="Nguyen M."/>
            <person name="Pham P.K."/>
            <person name="Cheuk R.F."/>
            <person name="Karlin-Newmann G."/>
            <person name="Liu S.X."/>
            <person name="Lam B."/>
            <person name="Sakano H."/>
            <person name="Wu T."/>
            <person name="Yu G."/>
            <person name="Miranda M."/>
            <person name="Quach H.L."/>
            <person name="Tripp M."/>
            <person name="Chang C.H."/>
            <person name="Lee J.M."/>
            <person name="Toriumi M.J."/>
            <person name="Chan M.M."/>
            <person name="Tang C.C."/>
            <person name="Onodera C.S."/>
            <person name="Deng J.M."/>
            <person name="Akiyama K."/>
            <person name="Ansari Y."/>
            <person name="Arakawa T."/>
            <person name="Banh J."/>
            <person name="Banno F."/>
            <person name="Bowser L."/>
            <person name="Brooks S.Y."/>
            <person name="Carninci P."/>
            <person name="Chao Q."/>
            <person name="Choy N."/>
            <person name="Enju A."/>
            <person name="Goldsmith A.D."/>
            <person name="Gurjal M."/>
            <person name="Hansen N.F."/>
            <person name="Hayashizaki Y."/>
            <person name="Johnson-Hopson C."/>
            <person name="Hsuan V.W."/>
            <person name="Iida K."/>
            <person name="Karnes M."/>
            <person name="Khan S."/>
            <person name="Koesema E."/>
            <person name="Ishida J."/>
            <person name="Jiang P.X."/>
            <person name="Jones T."/>
            <person name="Kawai J."/>
            <person name="Kamiya A."/>
            <person name="Meyers C."/>
            <person name="Nakajima M."/>
            <person name="Narusaka M."/>
            <person name="Seki M."/>
            <person name="Sakurai T."/>
            <person name="Satou M."/>
            <person name="Tamse R."/>
            <person name="Vaysberg M."/>
            <person name="Wallender E.K."/>
            <person name="Wong C."/>
            <person name="Yamamura Y."/>
            <person name="Yuan S."/>
            <person name="Shinozaki K."/>
            <person name="Davis R.W."/>
            <person name="Theologis A."/>
            <person name="Ecker J.R."/>
        </authorList>
    </citation>
    <scope>NUCLEOTIDE SEQUENCE [LARGE SCALE MRNA] OF 2-402</scope>
    <source>
        <strain>cv. Columbia</strain>
    </source>
</reference>
<keyword id="KW-0496">Mitochondrion</keyword>
<keyword id="KW-1185">Reference proteome</keyword>
<keyword id="KW-0677">Repeat</keyword>
<keyword id="KW-0809">Transit peptide</keyword>
<gene>
    <name type="primary">APO3</name>
    <name type="ordered locus">At5g61930</name>
    <name type="ORF">K22G18.5</name>
</gene>
<proteinExistence type="evidence at transcript level"/>